<gene>
    <name evidence="18" type="primary">FUB1</name>
    <name type="ORF">FVEG_12523</name>
</gene>
<keyword id="KW-0012">Acyltransferase</keyword>
<keyword id="KW-0511">Multifunctional enzyme</keyword>
<keyword id="KW-0521">NADP</keyword>
<keyword id="KW-0560">Oxidoreductase</keyword>
<keyword id="KW-0596">Phosphopantetheine</keyword>
<keyword id="KW-0597">Phosphoprotein</keyword>
<keyword id="KW-1185">Reference proteome</keyword>
<keyword id="KW-0808">Transferase</keyword>
<accession>W7MT31</accession>
<reference key="1">
    <citation type="journal article" date="2010" name="Nature">
        <title>Comparative genomics reveals mobile pathogenicity chromosomes in Fusarium.</title>
        <authorList>
            <person name="Ma L.-J."/>
            <person name="van der Does H.C."/>
            <person name="Borkovich K.A."/>
            <person name="Coleman J.J."/>
            <person name="Daboussi M.-J."/>
            <person name="Di Pietro A."/>
            <person name="Dufresne M."/>
            <person name="Freitag M."/>
            <person name="Grabherr M."/>
            <person name="Henrissat B."/>
            <person name="Houterman P.M."/>
            <person name="Kang S."/>
            <person name="Shim W.-B."/>
            <person name="Woloshuk C."/>
            <person name="Xie X."/>
            <person name="Xu J.-R."/>
            <person name="Antoniw J."/>
            <person name="Baker S.E."/>
            <person name="Bluhm B.H."/>
            <person name="Breakspear A."/>
            <person name="Brown D.W."/>
            <person name="Butchko R.A.E."/>
            <person name="Chapman S."/>
            <person name="Coulson R."/>
            <person name="Coutinho P.M."/>
            <person name="Danchin E.G.J."/>
            <person name="Diener A."/>
            <person name="Gale L.R."/>
            <person name="Gardiner D.M."/>
            <person name="Goff S."/>
            <person name="Hammond-Kosack K.E."/>
            <person name="Hilburn K."/>
            <person name="Hua-Van A."/>
            <person name="Jonkers W."/>
            <person name="Kazan K."/>
            <person name="Kodira C.D."/>
            <person name="Koehrsen M."/>
            <person name="Kumar L."/>
            <person name="Lee Y.-H."/>
            <person name="Li L."/>
            <person name="Manners J.M."/>
            <person name="Miranda-Saavedra D."/>
            <person name="Mukherjee M."/>
            <person name="Park G."/>
            <person name="Park J."/>
            <person name="Park S.-Y."/>
            <person name="Proctor R.H."/>
            <person name="Regev A."/>
            <person name="Ruiz-Roldan M.C."/>
            <person name="Sain D."/>
            <person name="Sakthikumar S."/>
            <person name="Sykes S."/>
            <person name="Schwartz D.C."/>
            <person name="Turgeon B.G."/>
            <person name="Wapinski I."/>
            <person name="Yoder O."/>
            <person name="Young S."/>
            <person name="Zeng Q."/>
            <person name="Zhou S."/>
            <person name="Galagan J."/>
            <person name="Cuomo C.A."/>
            <person name="Kistler H.C."/>
            <person name="Rep M."/>
        </authorList>
    </citation>
    <scope>NUCLEOTIDE SEQUENCE [LARGE SCALE GENOMIC DNA]</scope>
    <source>
        <strain>M3125 / FGSC 7600</strain>
    </source>
</reference>
<reference key="2">
    <citation type="journal article" date="2006" name="Planta">
        <title>Fusaric acid induces apoptosis in saffron root-tip cells: roles of caspase-like activity, cytochrome c, and H2O2.</title>
        <authorList>
            <person name="Samadi L."/>
            <person name="Shahsavan Behboodi B."/>
        </authorList>
    </citation>
    <scope>BIOTECHNOLOGY</scope>
</reference>
<reference key="3">
    <citation type="journal article" date="2008" name="J. Appl. Microbiol.">
        <title>Bikaverin and fusaric acid from Fusarium oxysporum show antioomycete activity against Phytophthora infestans.</title>
        <authorList>
            <person name="Son S.W."/>
            <person name="Kim H.Y."/>
            <person name="Choi G.J."/>
            <person name="Lim H.K."/>
            <person name="Jang K.S."/>
            <person name="Lee S.O."/>
            <person name="Lee S."/>
            <person name="Sung N.D."/>
            <person name="Kim J.C."/>
        </authorList>
    </citation>
    <scope>BIOTECHNOLOGY</scope>
</reference>
<reference key="4">
    <citation type="journal article" date="2011" name="Arch. Pharm. Res.">
        <title>Antimycobacterial activity of fusaric acid from a mangrove endophyte and its metal complexes.</title>
        <authorList>
            <person name="Pan J.H."/>
            <person name="Chen Y."/>
            <person name="Huang Y.H."/>
            <person name="Tao Y.W."/>
            <person name="Wang J."/>
            <person name="Li Y."/>
            <person name="Peng Y."/>
            <person name="Dong T."/>
            <person name="Lai X.M."/>
            <person name="Lin Y.C."/>
        </authorList>
    </citation>
    <scope>BIOTECHNOLOGY</scope>
</reference>
<reference key="5">
    <citation type="journal article" date="2011" name="Toxicon">
        <title>Phytotoxicity of fusaric acid and analogs to cotton.</title>
        <authorList>
            <person name="Stipanovic R.D."/>
            <person name="Puckhaber L.S."/>
            <person name="Liu J."/>
            <person name="Bell A.A."/>
        </authorList>
    </citation>
    <scope>BIOTECHNOLOGY</scope>
</reference>
<reference key="6">
    <citation type="journal article" date="2012" name="Fungal Genet. Biol.">
        <title>Identification of gene clusters associated with fusaric acid, fusarin, and perithecial pigment production in Fusarium verticillioides.</title>
        <authorList>
            <person name="Brown D.W."/>
            <person name="Butchko R.A."/>
            <person name="Busman M."/>
            <person name="Proctor R.H."/>
        </authorList>
    </citation>
    <scope>FUNCTION</scope>
    <scope>DISRUPTION PHENOTYPE</scope>
    <scope>CATALYTIC ACTIVITY</scope>
</reference>
<reference key="7">
    <citation type="journal article" date="2012" name="Fungal Genet. Biol.">
        <title>Lae1 regulates expression of multiple secondary metabolite gene clusters in Fusarium verticillioides.</title>
        <authorList>
            <person name="Butchko R.A."/>
            <person name="Brown D.W."/>
            <person name="Busman M."/>
            <person name="Tudzynski B."/>
            <person name="Wiemann P."/>
        </authorList>
    </citation>
    <scope>INDUCTION</scope>
</reference>
<reference key="8">
    <citation type="journal article" date="2012" name="Planta Med.">
        <title>In vitro acanthamoebicidal activity of fusaric acid and dehydrofusaric acid from an endophytic fungus Fusarium sp. Tlau3.</title>
        <authorList>
            <person name="Boonman N."/>
            <person name="Prachya S."/>
            <person name="Boonmee A."/>
            <person name="Kittakoop P."/>
            <person name="Wiyakrutta S."/>
            <person name="Sriubolmas N."/>
            <person name="Warit S."/>
            <person name="Dharmkrong-At Chusattayanond A."/>
        </authorList>
    </citation>
    <scope>BIOTECHNOLOGY</scope>
</reference>
<reference key="9">
    <citation type="journal article" date="2013" name="Planta">
        <title>Fusaric acid induction of programmed cell death modulated through nitric oxide signalling in tobacco suspension cells.</title>
        <authorList>
            <person name="Jiao J."/>
            <person name="Zhou B."/>
            <person name="Zhu X."/>
            <person name="Gao Z."/>
            <person name="Liang Y."/>
        </authorList>
    </citation>
    <scope>BIOTECHNOLOGY</scope>
</reference>
<reference key="10">
    <citation type="journal article" date="2013" name="PLoS ONE">
        <title>Contamination of bananas with beauvericin and fusaric acid produced by Fusarium oxysporum f. sp. cubense.</title>
        <authorList>
            <person name="Li C."/>
            <person name="Zuo C."/>
            <person name="Deng G."/>
            <person name="Kuang R."/>
            <person name="Yang Q."/>
            <person name="Hu C."/>
            <person name="Sheng O."/>
            <person name="Zhang S."/>
            <person name="Ma L."/>
            <person name="Wei Y."/>
            <person name="Yang J."/>
            <person name="Liu S."/>
            <person name="Biswas M.K."/>
            <person name="Viljoen A."/>
            <person name="Yi G."/>
        </authorList>
    </citation>
    <scope>BIOTECHNOLOGY</scope>
</reference>
<reference key="11">
    <citation type="journal article" date="2015" name="Mol. Plant Microbe Interact.">
        <title>Identification of a 12-gene fusaric acid biosynthetic gene cluster in Fusarium species through comparative and functional genomics.</title>
        <authorList>
            <person name="Brown D.W."/>
            <person name="Lee S.H."/>
            <person name="Kim L.H."/>
            <person name="Ryu J.G."/>
            <person name="Lee S."/>
            <person name="Seo Y."/>
            <person name="Kim Y.H."/>
            <person name="Busman M."/>
            <person name="Yun S.H."/>
            <person name="Proctor R.H."/>
            <person name="Lee T."/>
        </authorList>
    </citation>
    <scope>FUNCTION</scope>
    <scope>INDUCTION</scope>
</reference>
<evidence type="ECO:0000250" key="1">
    <source>
        <dbReference type="UniProtKB" id="S0DRI1"/>
    </source>
</evidence>
<evidence type="ECO:0000255" key="2"/>
<evidence type="ECO:0000255" key="3">
    <source>
        <dbReference type="PROSITE-ProRule" id="PRU00258"/>
    </source>
</evidence>
<evidence type="ECO:0000255" key="4">
    <source>
        <dbReference type="PROSITE-ProRule" id="PRU01348"/>
    </source>
</evidence>
<evidence type="ECO:0000255" key="5">
    <source>
        <dbReference type="PROSITE-ProRule" id="PRU01363"/>
    </source>
</evidence>
<evidence type="ECO:0000255" key="6">
    <source>
        <dbReference type="PROSITE-ProRule" id="PRU10022"/>
    </source>
</evidence>
<evidence type="ECO:0000256" key="7">
    <source>
        <dbReference type="SAM" id="MobiDB-lite"/>
    </source>
</evidence>
<evidence type="ECO:0000269" key="8">
    <source>
    </source>
</evidence>
<evidence type="ECO:0000269" key="9">
    <source>
    </source>
</evidence>
<evidence type="ECO:0000269" key="10">
    <source>
    </source>
</evidence>
<evidence type="ECO:0000269" key="11">
    <source>
    </source>
</evidence>
<evidence type="ECO:0000269" key="12">
    <source>
    </source>
</evidence>
<evidence type="ECO:0000269" key="13">
    <source>
    </source>
</evidence>
<evidence type="ECO:0000269" key="14">
    <source>
    </source>
</evidence>
<evidence type="ECO:0000269" key="15">
    <source>
    </source>
</evidence>
<evidence type="ECO:0000269" key="16">
    <source>
    </source>
</evidence>
<evidence type="ECO:0000269" key="17">
    <source>
    </source>
</evidence>
<evidence type="ECO:0000303" key="18">
    <source>
    </source>
</evidence>
<evidence type="ECO:0000305" key="19"/>
<evidence type="ECO:0000305" key="20">
    <source>
    </source>
</evidence>
<comment type="function">
    <text evidence="1 12 17">Reducing polyketide synthase; part of the gene cluster that mediates the biosynthesis of fusaric acid, a mycotoxin with low to moderate toxicity to animals and humans, but with high phytotoxic properties (PubMed:22652150, PubMed:25372119). L-aspartate is suggested as fusaric acid amino acid precursor that is activated and further processed to O-acetyl-L-homoserine by cluster enzymes aspartate kinase FUB3 and homoserine O-acetyltransferase FUB5, as well as enzymes of the primary metabolism (By similarity). The polyketide synthase (PKS) FUB1 generates the triketide trans-2-hexenal which is presumptively released by the hydrolase FUB4 and linked to the NRPS-bound amino acid precursor by NAD(P)-dependent dehydrogenase FUB6 (By similarity). FUB1, FUB4, and the non-canonical NRPS Fub8 may form an enzyme complex (By similarity). Further processing of the NRPS-bound intermediate might be carried out by FUB6 and the sulfhydrylase FUB7, enabling a spontaneous electrocyclization to close the carbon backbone of fusaric acid (By similarity). Dihydrofusaric acid is likely to be released via reduction by the thioester reductase (TR) domain of FUB8 whereupon the final oxidation to fusaric acid may (also) be performed by the FMN-dependent dehydrogenase FUB9 (By similarity).</text>
</comment>
<comment type="pathway">
    <text evidence="12 17">Mycotoxin biosynthesis.</text>
</comment>
<comment type="induction">
    <text evidence="13 17">Expression is positively regulated by the fusaric acid cluster specific transcription factor FUB10 (PubMed:25372119). Expression is also positively regulated by the secondary metabolism regulator LAE1 (PubMed:22713715).</text>
</comment>
<comment type="domain">
    <text evidence="19">Multidomain protein; including a starter unit:ACP transacylase (SAT) that selects the starter unit; a ketosynthase (KS) that catalyzes repeated decarboxylative condensation to elongate the polyketide backbone; a malonyl-CoA:ACP transacylase (MAT) that selects and transfers the extender unit malonyl-CoA; a product template (PT) domain that controls the immediate cyclization regioselectivity of the reactive polyketide backbone; and an acyl-carrier protein (ACP) that serves as the tether of the growing and completed polyketide via its phosphopantetheinyl arm.</text>
</comment>
<comment type="disruption phenotype">
    <text evidence="12">Impairs the production of fusaric acid (PubMed:22652150).</text>
</comment>
<comment type="biotechnology">
    <text evidence="8 9 10 11 14 15 16">Fusaric acid is phytotoxic to plants such as cotton and banana (PubMed:20955724, PubMed:23922960). It has been shown to induce programmed cell death in plants (PubMed:16868776, PubMed:23838885). In addition to a mild toxicity to animals, fusaric acid exhibits acanthamoebicidal, antioomycete, and antimycobacterial activities (PubMed:17927749, PubMed:21811925, PubMed:22864988).</text>
</comment>
<sequence length="2409" mass="260134">MTLSNGSNGANGTSNGHGAHPSANGFHNAANGGANNGTPNGGAEYNASLPQVDGDISSAIAVIGVSGRFPGDATSPRHLWDLLKEGRNALSDVPESRFNIDGFYHPDGGRAGTLNTKQGYFLKSDVDKFDAGFFSITPEEARGMDPTQRILLELAYEGLENAGLKIDEVANQHMSCYIGACQHDYWDLQAYDMDSAPKYTATGTGPALLSNRISWFFNLKGPSVTIDTACSSTLTALHLAGQSIRNGESDSALVGGLGLHLLPNFGVFMSSMSFLSADNKCHSFDASANGYARAEGGGFVVLKRLDKALADGDTIRAVLRSTGSNQDGRTLGITQPSASRQEELIRATYASAGLTFDKTNFFEAHGTGTKVGDPIECSVIGNVFGKTRERPVYVGSVKSNIGHLEGASGLAGLVKTIYSLESGVISPTYGLENVNPKIKLDEWKINLPTEKIKWPAGLRRASINSFGYGGANAHAVLDDAYHFLKTHNLEGHHNTKAEDVPATGLIGNGSQDIIEKTDKKPRLFLISSHEESGIARLSQTLQAYLADPAARDLPEDQFLHRLAYTLSEKRSSLPWKTYAAASTIEELQQALDGAPTKAARVPRSQALTFIFTGQGAQWFAMGRELQKYPIFRQSLHACSQYLKDFGSTWDLVEELNRDAKESIIDLPYVSQPSCTALQLSIIDLLASWGIHPQVTVGHSSGEIAAAYAKGAFDKEAAMRIAYFRGHLTGNITKTGSMAAVGLGPERVSEYLSRVTAGKIVVACINSPASVTLSGDVEGIDEVLTFLQADDIFARKLRVTTAYHSHHMQQISEEYLNSLSGKWELKPGNPKVRMFSSVSAKPIDGTELGPAYWVANLVSPVNFSGAVTAAANAGALGKRKASGKKGSADAMVEIGPHAALQGPLKQILDSIGDKGASPKYFSAIKRKQDAIQTTLEVVGELLVLGHQVNVPLVNAYTETTSALVDLPPYAWNTTNSYWHESAAVTAYKQRKHPRLELLGVRDPRSTKAEPAWHNYLRISEQPWIEHHQFQNTNIYPMAGMIVMAIEGLRQVETRTDVEGYTIRDVNIGSALVVPLDQTIETRLQLTPWRSGPNVSWSHWTEFTVSSRNESGSWTTNCTGLVSTSYKRETNSTFLDEEAAANALLSQEYKAISNSDLPSVDPTVFYTKLDESGFSLGPAFRGVKELNLFDHKAHFSMEVIDTKDFYPKKWEPAHLIHPAVLDVFVHLLISSTGDAAEIKARVPVSTASLYISADFDSTSGTKYHGFSTSKKHGATNMLSNVIAFAEGGSKPLIALEGCKTVPLRGASDPSSGDGQSLGHVPVVPKKVVDVDISDAVTLEKLLQGTDFASKLGSYLSLLGQKRPGLSVLEYSSSTSSILLRALTAQAEELQGSITSVALTTPLDGPADEETSVPEAWKNKVQQEKLDLTQDPSTQGFEDVALDVIFIDVEEQGDISLVLKNAKKILKPSGILLITNHASAISTDLLTSTDLTSTTVSELIIARHKPDTDPSDHQVLIVTPPSPSSGLSKLIAQAENDLTSQGYEVNKADFANIPEQTTPFLTLSALDVDTPFLESFHHETFTKLRSLFLASRGTLWLTLDTASRGLVNGLGRTIRAEHPDISFTVLSLDALTSLDSALNTKTISSIIENMSRKTFGETSDSEYVIRNNQVLVERLIPNPDLKALLDSSKTGNNLSAVKVPLKQVNKPLQLSIRDPGLLDTLEYLSVPDLFEPLGDNQIEIEVGSVGLNFRDVMVAMGQMEDNTLGIECAGVVAKVGAGVQKFKVGDRVFGMHAGCFQTRVRVDPRTFQRTPEHLGDEEAASLMCTSATVVHSLIDVARLQRGESVLIHSAAGGVGQAAIRLAKYLGAEIFATVSSEKKKRLLIEDYGVKESHIFNSRDYSFADGILRLTNQRGVDVVINSLAGEALRRTWLCVAPFGRFIELGKRDIYDNSGLDMRPFLDNITFSGLDILTQVISYPDRFEAIGNQVVELLSKNAISPLNNLARYSFGEVSKAFRLMQSGGHVGKIVLYPRPDDIVPIVPEGLESFCLPHDATYVLIGGLGGIGRSVTRLLVERGARHLVFLSRSAAARPEAQALLDELHAQGVQAKAFAVDVAEKSQLEPVINDVKQSFPAIKGLIHCAMDLRDAVYSNMTADDWNASLRPKLLATRNLHDLLPTDLDFFICLSSIAGIIGSRGQANYNAGNTYQDALAHHRAASGLAATSINLSLVVGIGVSTERSEVFQLLKDGGLLGMDENDVLNVIKAAISGCAPTQVALGASTGGQLDKLAANDPYWFADSRFAVLNQLDRQGTGAVAGGQDWKKLLAAAASPDEVYEIVLQQLLEGVSKIIKADVEDMDSRKSLPALGIDSLVAIEIRTWLLKEFQADLSVFDIVSNDPLTGFAKKVMAKSVLIA</sequence>
<proteinExistence type="evidence at protein level"/>
<dbReference type="EC" id="2.3.1.-" evidence="20"/>
<dbReference type="EMBL" id="CM000580">
    <property type="protein sequence ID" value="EWG54266.1"/>
    <property type="molecule type" value="Genomic_DNA"/>
</dbReference>
<dbReference type="RefSeq" id="XP_018760457.1">
    <property type="nucleotide sequence ID" value="XM_018901864.1"/>
</dbReference>
<dbReference type="SMR" id="W7MT31"/>
<dbReference type="STRING" id="334819.W7MT31"/>
<dbReference type="GeneID" id="30069957"/>
<dbReference type="KEGG" id="fvr:FVEG_12523"/>
<dbReference type="VEuPathDB" id="FungiDB:FVEG_12523"/>
<dbReference type="eggNOG" id="KOG1202">
    <property type="taxonomic scope" value="Eukaryota"/>
</dbReference>
<dbReference type="OrthoDB" id="58138at110618"/>
<dbReference type="BioCyc" id="MetaCyc:MONOMER-19345"/>
<dbReference type="PHI-base" id="PHI:3387"/>
<dbReference type="Proteomes" id="UP000009096">
    <property type="component" value="Chromosome 3"/>
</dbReference>
<dbReference type="GO" id="GO:0004315">
    <property type="term" value="F:3-oxoacyl-[acyl-carrier-protein] synthase activity"/>
    <property type="evidence" value="ECO:0007669"/>
    <property type="project" value="InterPro"/>
</dbReference>
<dbReference type="GO" id="GO:0004312">
    <property type="term" value="F:fatty acid synthase activity"/>
    <property type="evidence" value="ECO:0007669"/>
    <property type="project" value="TreeGrafter"/>
</dbReference>
<dbReference type="GO" id="GO:0016491">
    <property type="term" value="F:oxidoreductase activity"/>
    <property type="evidence" value="ECO:0007669"/>
    <property type="project" value="UniProtKB-KW"/>
</dbReference>
<dbReference type="GO" id="GO:0031177">
    <property type="term" value="F:phosphopantetheine binding"/>
    <property type="evidence" value="ECO:0007669"/>
    <property type="project" value="InterPro"/>
</dbReference>
<dbReference type="GO" id="GO:0006633">
    <property type="term" value="P:fatty acid biosynthetic process"/>
    <property type="evidence" value="ECO:0007669"/>
    <property type="project" value="InterPro"/>
</dbReference>
<dbReference type="GO" id="GO:0030639">
    <property type="term" value="P:polyketide biosynthetic process"/>
    <property type="evidence" value="ECO:0007669"/>
    <property type="project" value="UniProtKB-ARBA"/>
</dbReference>
<dbReference type="CDD" id="cd05195">
    <property type="entry name" value="enoyl_red"/>
    <property type="match status" value="1"/>
</dbReference>
<dbReference type="CDD" id="cd05274">
    <property type="entry name" value="KR_FAS_SDR_x"/>
    <property type="match status" value="1"/>
</dbReference>
<dbReference type="CDD" id="cd00833">
    <property type="entry name" value="PKS"/>
    <property type="match status" value="1"/>
</dbReference>
<dbReference type="FunFam" id="3.40.50.720:FF:000209">
    <property type="entry name" value="Polyketide synthase Pks12"/>
    <property type="match status" value="1"/>
</dbReference>
<dbReference type="Gene3D" id="3.40.47.10">
    <property type="match status" value="1"/>
</dbReference>
<dbReference type="Gene3D" id="1.10.1200.10">
    <property type="entry name" value="ACP-like"/>
    <property type="match status" value="1"/>
</dbReference>
<dbReference type="Gene3D" id="3.40.366.10">
    <property type="entry name" value="Malonyl-Coenzyme A Acyl Carrier Protein, domain 2"/>
    <property type="match status" value="1"/>
</dbReference>
<dbReference type="Gene3D" id="3.90.180.10">
    <property type="entry name" value="Medium-chain alcohol dehydrogenases, catalytic domain"/>
    <property type="match status" value="1"/>
</dbReference>
<dbReference type="Gene3D" id="3.40.50.720">
    <property type="entry name" value="NAD(P)-binding Rossmann-like Domain"/>
    <property type="match status" value="2"/>
</dbReference>
<dbReference type="Gene3D" id="3.10.129.110">
    <property type="entry name" value="Polyketide synthase dehydratase"/>
    <property type="match status" value="1"/>
</dbReference>
<dbReference type="InterPro" id="IPR001227">
    <property type="entry name" value="Ac_transferase_dom_sf"/>
</dbReference>
<dbReference type="InterPro" id="IPR036736">
    <property type="entry name" value="ACP-like_sf"/>
</dbReference>
<dbReference type="InterPro" id="IPR014043">
    <property type="entry name" value="Acyl_transferase_dom"/>
</dbReference>
<dbReference type="InterPro" id="IPR016035">
    <property type="entry name" value="Acyl_Trfase/lysoPLipase"/>
</dbReference>
<dbReference type="InterPro" id="IPR013154">
    <property type="entry name" value="ADH-like_N"/>
</dbReference>
<dbReference type="InterPro" id="IPR011032">
    <property type="entry name" value="GroES-like_sf"/>
</dbReference>
<dbReference type="InterPro" id="IPR018201">
    <property type="entry name" value="Ketoacyl_synth_AS"/>
</dbReference>
<dbReference type="InterPro" id="IPR014031">
    <property type="entry name" value="Ketoacyl_synth_C"/>
</dbReference>
<dbReference type="InterPro" id="IPR014030">
    <property type="entry name" value="Ketoacyl_synth_N"/>
</dbReference>
<dbReference type="InterPro" id="IPR016036">
    <property type="entry name" value="Malonyl_transacylase_ACP-bd"/>
</dbReference>
<dbReference type="InterPro" id="IPR036291">
    <property type="entry name" value="NAD(P)-bd_dom_sf"/>
</dbReference>
<dbReference type="InterPro" id="IPR056501">
    <property type="entry name" value="NAD-bd_HRPKS_sdrA"/>
</dbReference>
<dbReference type="InterPro" id="IPR032821">
    <property type="entry name" value="PKS_assoc"/>
</dbReference>
<dbReference type="InterPro" id="IPR020841">
    <property type="entry name" value="PKS_Beta-ketoAc_synthase_dom"/>
</dbReference>
<dbReference type="InterPro" id="IPR042104">
    <property type="entry name" value="PKS_dehydratase_sf"/>
</dbReference>
<dbReference type="InterPro" id="IPR020807">
    <property type="entry name" value="PKS_DH"/>
</dbReference>
<dbReference type="InterPro" id="IPR049551">
    <property type="entry name" value="PKS_DH_C"/>
</dbReference>
<dbReference type="InterPro" id="IPR049552">
    <property type="entry name" value="PKS_DH_N"/>
</dbReference>
<dbReference type="InterPro" id="IPR020843">
    <property type="entry name" value="PKS_ER"/>
</dbReference>
<dbReference type="InterPro" id="IPR013968">
    <property type="entry name" value="PKS_KR"/>
</dbReference>
<dbReference type="InterPro" id="IPR049900">
    <property type="entry name" value="PKS_mFAS_DH"/>
</dbReference>
<dbReference type="InterPro" id="IPR050091">
    <property type="entry name" value="PKS_NRPS_Biosynth_Enz"/>
</dbReference>
<dbReference type="InterPro" id="IPR020806">
    <property type="entry name" value="PKS_PP-bd"/>
</dbReference>
<dbReference type="InterPro" id="IPR009081">
    <property type="entry name" value="PP-bd_ACP"/>
</dbReference>
<dbReference type="InterPro" id="IPR006162">
    <property type="entry name" value="Ppantetheine_attach_site"/>
</dbReference>
<dbReference type="InterPro" id="IPR016039">
    <property type="entry name" value="Thiolase-like"/>
</dbReference>
<dbReference type="PANTHER" id="PTHR43775:SF29">
    <property type="entry name" value="ASPERFURANONE POLYKETIDE SYNTHASE AFOG-RELATED"/>
    <property type="match status" value="1"/>
</dbReference>
<dbReference type="PANTHER" id="PTHR43775">
    <property type="entry name" value="FATTY ACID SYNTHASE"/>
    <property type="match status" value="1"/>
</dbReference>
<dbReference type="Pfam" id="PF00698">
    <property type="entry name" value="Acyl_transf_1"/>
    <property type="match status" value="1"/>
</dbReference>
<dbReference type="Pfam" id="PF08240">
    <property type="entry name" value="ADH_N"/>
    <property type="match status" value="1"/>
</dbReference>
<dbReference type="Pfam" id="PF13602">
    <property type="entry name" value="ADH_zinc_N_2"/>
    <property type="match status" value="1"/>
</dbReference>
<dbReference type="Pfam" id="PF16197">
    <property type="entry name" value="KAsynt_C_assoc"/>
    <property type="match status" value="1"/>
</dbReference>
<dbReference type="Pfam" id="PF00109">
    <property type="entry name" value="ketoacyl-synt"/>
    <property type="match status" value="1"/>
</dbReference>
<dbReference type="Pfam" id="PF02801">
    <property type="entry name" value="Ketoacyl-synt_C"/>
    <property type="match status" value="1"/>
</dbReference>
<dbReference type="Pfam" id="PF08659">
    <property type="entry name" value="KR"/>
    <property type="match status" value="1"/>
</dbReference>
<dbReference type="Pfam" id="PF23114">
    <property type="entry name" value="NAD-bd_HRPKS_sdrA"/>
    <property type="match status" value="1"/>
</dbReference>
<dbReference type="Pfam" id="PF21089">
    <property type="entry name" value="PKS_DH_N"/>
    <property type="match status" value="1"/>
</dbReference>
<dbReference type="Pfam" id="PF00550">
    <property type="entry name" value="PP-binding"/>
    <property type="match status" value="1"/>
</dbReference>
<dbReference type="Pfam" id="PF14765">
    <property type="entry name" value="PS-DH"/>
    <property type="match status" value="1"/>
</dbReference>
<dbReference type="SMART" id="SM00827">
    <property type="entry name" value="PKS_AT"/>
    <property type="match status" value="1"/>
</dbReference>
<dbReference type="SMART" id="SM00826">
    <property type="entry name" value="PKS_DH"/>
    <property type="match status" value="1"/>
</dbReference>
<dbReference type="SMART" id="SM00829">
    <property type="entry name" value="PKS_ER"/>
    <property type="match status" value="1"/>
</dbReference>
<dbReference type="SMART" id="SM00822">
    <property type="entry name" value="PKS_KR"/>
    <property type="match status" value="1"/>
</dbReference>
<dbReference type="SMART" id="SM00825">
    <property type="entry name" value="PKS_KS"/>
    <property type="match status" value="1"/>
</dbReference>
<dbReference type="SMART" id="SM00823">
    <property type="entry name" value="PKS_PP"/>
    <property type="match status" value="1"/>
</dbReference>
<dbReference type="SUPFAM" id="SSF47336">
    <property type="entry name" value="ACP-like"/>
    <property type="match status" value="1"/>
</dbReference>
<dbReference type="SUPFAM" id="SSF52151">
    <property type="entry name" value="FabD/lysophospholipase-like"/>
    <property type="match status" value="1"/>
</dbReference>
<dbReference type="SUPFAM" id="SSF50129">
    <property type="entry name" value="GroES-like"/>
    <property type="match status" value="1"/>
</dbReference>
<dbReference type="SUPFAM" id="SSF51735">
    <property type="entry name" value="NAD(P)-binding Rossmann-fold domains"/>
    <property type="match status" value="2"/>
</dbReference>
<dbReference type="SUPFAM" id="SSF55048">
    <property type="entry name" value="Probable ACP-binding domain of malonyl-CoA ACP transacylase"/>
    <property type="match status" value="1"/>
</dbReference>
<dbReference type="SUPFAM" id="SSF53901">
    <property type="entry name" value="Thiolase-like"/>
    <property type="match status" value="1"/>
</dbReference>
<dbReference type="PROSITE" id="PS50075">
    <property type="entry name" value="CARRIER"/>
    <property type="match status" value="1"/>
</dbReference>
<dbReference type="PROSITE" id="PS00606">
    <property type="entry name" value="KS3_1"/>
    <property type="match status" value="1"/>
</dbReference>
<dbReference type="PROSITE" id="PS52004">
    <property type="entry name" value="KS3_2"/>
    <property type="match status" value="1"/>
</dbReference>
<dbReference type="PROSITE" id="PS00012">
    <property type="entry name" value="PHOSPHOPANTETHEINE"/>
    <property type="match status" value="1"/>
</dbReference>
<dbReference type="PROSITE" id="PS52019">
    <property type="entry name" value="PKS_MFAS_DH"/>
    <property type="match status" value="1"/>
</dbReference>
<protein>
    <recommendedName>
        <fullName evidence="18">Reducing polyketide synthase FUB1</fullName>
        <ecNumber evidence="20">2.3.1.-</ecNumber>
    </recommendedName>
    <alternativeName>
        <fullName evidence="18">Fusaric acid biosynthesis protein 1</fullName>
    </alternativeName>
</protein>
<name>FUB1_GIBM7</name>
<feature type="chain" id="PRO_0000437308" description="Reducing polyketide synthase FUB1">
    <location>
        <begin position="1"/>
        <end position="2409"/>
    </location>
</feature>
<feature type="domain" description="Ketosynthase family 3 (KS3)" evidence="4">
    <location>
        <begin position="57"/>
        <end position="479"/>
    </location>
</feature>
<feature type="domain" description="PKS/mFAS DH" evidence="5">
    <location>
        <begin position="994"/>
        <end position="1307"/>
    </location>
</feature>
<feature type="domain" description="Carrier" evidence="3">
    <location>
        <begin position="2328"/>
        <end position="2405"/>
    </location>
</feature>
<feature type="region of interest" description="Disordered" evidence="7">
    <location>
        <begin position="1"/>
        <end position="49"/>
    </location>
</feature>
<feature type="region of interest" description="Malonyl-CoA:ACP transacylase (MAT) domain" evidence="2">
    <location>
        <begin position="608"/>
        <end position="929"/>
    </location>
</feature>
<feature type="region of interest" description="N-terminal hotdog fold" evidence="5">
    <location>
        <begin position="994"/>
        <end position="1127"/>
    </location>
</feature>
<feature type="region of interest" description="Dehydratase (DH) domain" evidence="2">
    <location>
        <begin position="995"/>
        <end position="1302"/>
    </location>
</feature>
<feature type="region of interest" description="C-terminal hotdog fold" evidence="5">
    <location>
        <begin position="1155"/>
        <end position="1307"/>
    </location>
</feature>
<feature type="region of interest" description="Enoyl reductase (ER) domain" evidence="2">
    <location>
        <begin position="1713"/>
        <end position="2025"/>
    </location>
</feature>
<feature type="region of interest" description="Ketoreductase (KR) domain" evidence="2">
    <location>
        <begin position="2049"/>
        <end position="2225"/>
    </location>
</feature>
<feature type="compositionally biased region" description="Low complexity" evidence="7">
    <location>
        <begin position="1"/>
        <end position="43"/>
    </location>
</feature>
<feature type="active site" description="For beta-ketoacyl synthase activity" evidence="4">
    <location>
        <position position="230"/>
    </location>
</feature>
<feature type="active site" description="For beta-ketoacyl synthase activity" evidence="4">
    <location>
        <position position="365"/>
    </location>
</feature>
<feature type="active site" description="For beta-ketoacyl synthase activity" evidence="4">
    <location>
        <position position="403"/>
    </location>
</feature>
<feature type="active site" description="For malonyltransferase activity" evidence="6">
    <location>
        <position position="699"/>
    </location>
</feature>
<feature type="active site" description="Proton acceptor; for dehydratase activity" evidence="5">
    <location>
        <position position="1026"/>
    </location>
</feature>
<feature type="active site" description="Proton donor; for dehydratase activity" evidence="5">
    <location>
        <position position="1220"/>
    </location>
</feature>
<feature type="modified residue" description="O-(pantetheine 4'-phosphoryl)serine" evidence="3">
    <location>
        <position position="2365"/>
    </location>
</feature>
<organism>
    <name type="scientific">Gibberella moniliformis (strain M3125 / FGSC 7600)</name>
    <name type="common">Maize ear and stalk rot fungus</name>
    <name type="synonym">Fusarium verticillioides</name>
    <dbReference type="NCBI Taxonomy" id="334819"/>
    <lineage>
        <taxon>Eukaryota</taxon>
        <taxon>Fungi</taxon>
        <taxon>Dikarya</taxon>
        <taxon>Ascomycota</taxon>
        <taxon>Pezizomycotina</taxon>
        <taxon>Sordariomycetes</taxon>
        <taxon>Hypocreomycetidae</taxon>
        <taxon>Hypocreales</taxon>
        <taxon>Nectriaceae</taxon>
        <taxon>Fusarium</taxon>
        <taxon>Fusarium fujikuroi species complex</taxon>
    </lineage>
</organism>